<keyword id="KW-0472">Membrane</keyword>
<keyword id="KW-0812">Transmembrane</keyword>
<keyword id="KW-1133">Transmembrane helix</keyword>
<name>YHE5_YEAST</name>
<protein>
    <recommendedName>
        <fullName>Putative UPF0377 protein YHL045W</fullName>
    </recommendedName>
</protein>
<proteinExistence type="uncertain"/>
<evidence type="ECO:0000255" key="1"/>
<evidence type="ECO:0000305" key="2"/>
<evidence type="ECO:0000305" key="3">
    <source>
    </source>
</evidence>
<gene>
    <name type="ordered locus">YHL045W</name>
</gene>
<accession>P38726</accession>
<organism>
    <name type="scientific">Saccharomyces cerevisiae (strain ATCC 204508 / S288c)</name>
    <name type="common">Baker's yeast</name>
    <dbReference type="NCBI Taxonomy" id="559292"/>
    <lineage>
        <taxon>Eukaryota</taxon>
        <taxon>Fungi</taxon>
        <taxon>Dikarya</taxon>
        <taxon>Ascomycota</taxon>
        <taxon>Saccharomycotina</taxon>
        <taxon>Saccharomycetes</taxon>
        <taxon>Saccharomycetales</taxon>
        <taxon>Saccharomycetaceae</taxon>
        <taxon>Saccharomyces</taxon>
    </lineage>
</organism>
<dbReference type="EMBL" id="U11583">
    <property type="protein sequence ID" value="AAB65057.1"/>
    <property type="molecule type" value="Genomic_DNA"/>
</dbReference>
<dbReference type="EMBL" id="AY693249">
    <property type="protein sequence ID" value="AAT93268.1"/>
    <property type="molecule type" value="Genomic_DNA"/>
</dbReference>
<dbReference type="PIR" id="S48923">
    <property type="entry name" value="S48923"/>
</dbReference>
<dbReference type="DIP" id="DIP-2091N"/>
<dbReference type="STRING" id="4932.YHL045W"/>
<dbReference type="PaxDb" id="4932-YHL045W"/>
<dbReference type="EnsemblFungi" id="YHL045W_mRNA">
    <property type="protein sequence ID" value="YHL045W"/>
    <property type="gene ID" value="YHL045W"/>
</dbReference>
<dbReference type="AGR" id="SGD:S000001037"/>
<dbReference type="SGD" id="S000001037">
    <property type="gene designation" value="YHL045W"/>
</dbReference>
<dbReference type="GeneTree" id="ENSGT00940000177730"/>
<dbReference type="HOGENOM" id="CLU_173518_0_0_1"/>
<dbReference type="OrthoDB" id="10290039at2759"/>
<dbReference type="GO" id="GO:0016020">
    <property type="term" value="C:membrane"/>
    <property type="evidence" value="ECO:0007669"/>
    <property type="project" value="UniProtKB-SubCell"/>
</dbReference>
<dbReference type="GO" id="GO:0005777">
    <property type="term" value="C:peroxisome"/>
    <property type="evidence" value="ECO:0000314"/>
    <property type="project" value="SGD"/>
</dbReference>
<feature type="chain" id="PRO_0000202877" description="Putative UPF0377 protein YHL045W">
    <location>
        <begin position="1"/>
        <end position="115"/>
    </location>
</feature>
<feature type="transmembrane region" description="Helical" evidence="1">
    <location>
        <begin position="10"/>
        <end position="30"/>
    </location>
</feature>
<reference key="1">
    <citation type="journal article" date="1994" name="Science">
        <title>Complete nucleotide sequence of Saccharomyces cerevisiae chromosome VIII.</title>
        <authorList>
            <person name="Johnston M."/>
            <person name="Andrews S."/>
            <person name="Brinkman R."/>
            <person name="Cooper J."/>
            <person name="Ding H."/>
            <person name="Dover J."/>
            <person name="Du Z."/>
            <person name="Favello A."/>
            <person name="Fulton L."/>
            <person name="Gattung S."/>
            <person name="Geisel C."/>
            <person name="Kirsten J."/>
            <person name="Kucaba T."/>
            <person name="Hillier L.W."/>
            <person name="Jier M."/>
            <person name="Johnston L."/>
            <person name="Langston Y."/>
            <person name="Latreille P."/>
            <person name="Louis E.J."/>
            <person name="Macri C."/>
            <person name="Mardis E."/>
            <person name="Menezes S."/>
            <person name="Mouser L."/>
            <person name="Nhan M."/>
            <person name="Rifkin L."/>
            <person name="Riles L."/>
            <person name="St Peter H."/>
            <person name="Trevaskis E."/>
            <person name="Vaughan K."/>
            <person name="Vignati D."/>
            <person name="Wilcox L."/>
            <person name="Wohldman P."/>
            <person name="Waterston R."/>
            <person name="Wilson R."/>
            <person name="Vaudin M."/>
        </authorList>
    </citation>
    <scope>NUCLEOTIDE SEQUENCE [LARGE SCALE GENOMIC DNA]</scope>
    <source>
        <strain>ATCC 204508 / S288c</strain>
    </source>
</reference>
<reference key="2">
    <citation type="journal article" date="2014" name="G3 (Bethesda)">
        <title>The reference genome sequence of Saccharomyces cerevisiae: Then and now.</title>
        <authorList>
            <person name="Engel S.R."/>
            <person name="Dietrich F.S."/>
            <person name="Fisk D.G."/>
            <person name="Binkley G."/>
            <person name="Balakrishnan R."/>
            <person name="Costanzo M.C."/>
            <person name="Dwight S.S."/>
            <person name="Hitz B.C."/>
            <person name="Karra K."/>
            <person name="Nash R.S."/>
            <person name="Weng S."/>
            <person name="Wong E.D."/>
            <person name="Lloyd P."/>
            <person name="Skrzypek M.S."/>
            <person name="Miyasato S.R."/>
            <person name="Simison M."/>
            <person name="Cherry J.M."/>
        </authorList>
    </citation>
    <scope>GENOME REANNOTATION</scope>
    <source>
        <strain>ATCC 204508 / S288c</strain>
    </source>
</reference>
<reference key="3">
    <citation type="journal article" date="2007" name="Genome Res.">
        <title>Approaching a complete repository of sequence-verified protein-encoding clones for Saccharomyces cerevisiae.</title>
        <authorList>
            <person name="Hu Y."/>
            <person name="Rolfs A."/>
            <person name="Bhullar B."/>
            <person name="Murthy T.V.S."/>
            <person name="Zhu C."/>
            <person name="Berger M.F."/>
            <person name="Camargo A.A."/>
            <person name="Kelley F."/>
            <person name="McCarron S."/>
            <person name="Jepson D."/>
            <person name="Richardson A."/>
            <person name="Raphael J."/>
            <person name="Moreira D."/>
            <person name="Taycher E."/>
            <person name="Zuo D."/>
            <person name="Mohr S."/>
            <person name="Kane M.F."/>
            <person name="Williamson J."/>
            <person name="Simpson A.J.G."/>
            <person name="Bulyk M.L."/>
            <person name="Harlow E."/>
            <person name="Marsischky G."/>
            <person name="Kolodner R.D."/>
            <person name="LaBaer J."/>
        </authorList>
    </citation>
    <scope>NUCLEOTIDE SEQUENCE [GENOMIC DNA]</scope>
    <source>
        <strain>ATCC 204508 / S288c</strain>
    </source>
</reference>
<sequence>MKMLLFLNEACIFIDSVCEGIVFWGLCLFVCAECGNAYYRGARVPYKTLFRAFEVSVFGQKEYPNFRFGPSYRFLCLSPYSICCKQPPMEEVILYYPSPDSLIKNRKRVLGVAYL</sequence>
<comment type="subcellular location">
    <subcellularLocation>
        <location evidence="2">Membrane</location>
        <topology evidence="2">Single-pass membrane protein</topology>
    </subcellularLocation>
</comment>
<comment type="similarity">
    <text evidence="2">Belongs to the UPF0377 family.</text>
</comment>
<comment type="caution">
    <text evidence="3">Product of a dubious gene prediction unlikely to encode a functional protein. Because of that it is not part of the S.cerevisiae S288c complete/reference proteome set.</text>
</comment>